<keyword id="KW-0027">Amidation</keyword>
<keyword id="KW-0903">Direct protein sequencing</keyword>
<keyword id="KW-0527">Neuropeptide</keyword>
<keyword id="KW-0964">Secreted</keyword>
<evidence type="ECO:0000250" key="1">
    <source>
        <dbReference type="UniProtKB" id="P84594"/>
    </source>
</evidence>
<evidence type="ECO:0000255" key="2"/>
<evidence type="ECO:0000269" key="3">
    <source>
    </source>
</evidence>
<evidence type="ECO:0000269" key="4">
    <source ref="2"/>
</evidence>
<evidence type="ECO:0000305" key="5"/>
<protein>
    <recommendedName>
        <fullName>Pyrokinin-5</fullName>
        <shortName>Dercr-PK-5</shortName>
    </recommendedName>
    <alternativeName>
        <fullName>DerCr-Capa-PK</fullName>
    </alternativeName>
    <alternativeName>
        <fullName>FXPRL-amide</fullName>
    </alternativeName>
</protein>
<comment type="function">
    <text evidence="1">Myoactive.</text>
</comment>
<comment type="subcellular location">
    <subcellularLocation>
        <location evidence="5">Secreted</location>
    </subcellularLocation>
</comment>
<comment type="tissue specificity">
    <text evidence="4">Expressed in abdominal perisympathetic organs and abdominal ganglia.</text>
</comment>
<comment type="mass spectrometry">
    <text>With amidation.</text>
</comment>
<comment type="similarity">
    <text evidence="2">Belongs to the pyrokinin family.</text>
</comment>
<accession>P84672</accession>
<proteinExistence type="evidence at protein level"/>
<feature type="peptide" id="PRO_0000044343" description="Pyrokinin-5">
    <location>
        <begin position="1"/>
        <end position="17"/>
    </location>
</feature>
<feature type="modified residue" description="Leucine amide" evidence="3 4">
    <location>
        <position position="17"/>
    </location>
</feature>
<reference key="1">
    <citation type="journal article" date="2009" name="BMC Evol. Biol.">
        <title>A proteomic approach for studying insect phylogeny: CAPA peptides of ancient insect taxa (Dictyoptera, Blattoptera) as a test case.</title>
        <authorList>
            <person name="Roth S."/>
            <person name="Fromm B."/>
            <person name="Gaede G."/>
            <person name="Predel R."/>
        </authorList>
    </citation>
    <scope>PROTEIN SEQUENCE</scope>
    <scope>AMIDATION AT LEU-17</scope>
    <source>
        <tissue>Abdominal perisympathetic organs</tissue>
    </source>
</reference>
<reference evidence="5" key="2">
    <citation type="submission" date="2005-09" db="UniProtKB">
        <authorList>
            <person name="Predel R."/>
        </authorList>
    </citation>
    <scope>PROTEIN SEQUENCE</scope>
    <scope>TISSUE SPECIFICITY</scope>
    <scope>MASS SPECTROMETRY</scope>
    <scope>AMIDATION AT LEU-17</scope>
    <source>
        <tissue>Abdominal perisympathetic organs</tissue>
    </source>
</reference>
<sequence>DGDMSGEGKGMWFGPRL</sequence>
<dbReference type="GO" id="GO:0005576">
    <property type="term" value="C:extracellular region"/>
    <property type="evidence" value="ECO:0007669"/>
    <property type="project" value="UniProtKB-SubCell"/>
</dbReference>
<dbReference type="GO" id="GO:0005184">
    <property type="term" value="F:neuropeptide hormone activity"/>
    <property type="evidence" value="ECO:0007669"/>
    <property type="project" value="InterPro"/>
</dbReference>
<dbReference type="GO" id="GO:0007218">
    <property type="term" value="P:neuropeptide signaling pathway"/>
    <property type="evidence" value="ECO:0007669"/>
    <property type="project" value="UniProtKB-KW"/>
</dbReference>
<dbReference type="InterPro" id="IPR001484">
    <property type="entry name" value="Pyrokinin_CS"/>
</dbReference>
<dbReference type="PROSITE" id="PS00539">
    <property type="entry name" value="PYROKININ"/>
    <property type="match status" value="1"/>
</dbReference>
<name>PPK5_DERCR</name>
<organism>
    <name type="scientific">Derocalymma cruralis</name>
    <name type="common">African cockroach</name>
    <dbReference type="NCBI Taxonomy" id="344972"/>
    <lineage>
        <taxon>Eukaryota</taxon>
        <taxon>Metazoa</taxon>
        <taxon>Ecdysozoa</taxon>
        <taxon>Arthropoda</taxon>
        <taxon>Hexapoda</taxon>
        <taxon>Insecta</taxon>
        <taxon>Pterygota</taxon>
        <taxon>Neoptera</taxon>
        <taxon>Polyneoptera</taxon>
        <taxon>Dictyoptera</taxon>
        <taxon>Blattodea</taxon>
        <taxon>Blaberoidea</taxon>
        <taxon>Blaberidae</taxon>
        <taxon>Perisphaerinae</taxon>
        <taxon>Derocalymma</taxon>
    </lineage>
</organism>